<reference key="1">
    <citation type="journal article" date="2007" name="Science">
        <title>Legumes symbioses: absence of nod genes in photosynthetic bradyrhizobia.</title>
        <authorList>
            <person name="Giraud E."/>
            <person name="Moulin L."/>
            <person name="Vallenet D."/>
            <person name="Barbe V."/>
            <person name="Cytryn E."/>
            <person name="Avarre J.-C."/>
            <person name="Jaubert M."/>
            <person name="Simon D."/>
            <person name="Cartieaux F."/>
            <person name="Prin Y."/>
            <person name="Bena G."/>
            <person name="Hannibal L."/>
            <person name="Fardoux J."/>
            <person name="Kojadinovic M."/>
            <person name="Vuillet L."/>
            <person name="Lajus A."/>
            <person name="Cruveiller S."/>
            <person name="Rouy Z."/>
            <person name="Mangenot S."/>
            <person name="Segurens B."/>
            <person name="Dossat C."/>
            <person name="Franck W.L."/>
            <person name="Chang W.-S."/>
            <person name="Saunders E."/>
            <person name="Bruce D."/>
            <person name="Richardson P."/>
            <person name="Normand P."/>
            <person name="Dreyfus B."/>
            <person name="Pignol D."/>
            <person name="Stacey G."/>
            <person name="Emerich D."/>
            <person name="Vermeglio A."/>
            <person name="Medigue C."/>
            <person name="Sadowsky M."/>
        </authorList>
    </citation>
    <scope>NUCLEOTIDE SEQUENCE [LARGE SCALE GENOMIC DNA]</scope>
    <source>
        <strain>BTAi1 / ATCC BAA-1182</strain>
    </source>
</reference>
<name>GATC_BRASB</name>
<dbReference type="EC" id="6.3.5.-" evidence="1"/>
<dbReference type="EMBL" id="CP000494">
    <property type="protein sequence ID" value="ABQ36740.1"/>
    <property type="molecule type" value="Genomic_DNA"/>
</dbReference>
<dbReference type="RefSeq" id="WP_012044726.1">
    <property type="nucleotide sequence ID" value="NC_009485.1"/>
</dbReference>
<dbReference type="SMR" id="A5EKP6"/>
<dbReference type="STRING" id="288000.BBta_4713"/>
<dbReference type="KEGG" id="bbt:BBta_4713"/>
<dbReference type="eggNOG" id="COG0721">
    <property type="taxonomic scope" value="Bacteria"/>
</dbReference>
<dbReference type="HOGENOM" id="CLU_105899_2_0_5"/>
<dbReference type="OrthoDB" id="9794326at2"/>
<dbReference type="Proteomes" id="UP000000246">
    <property type="component" value="Chromosome"/>
</dbReference>
<dbReference type="GO" id="GO:0050566">
    <property type="term" value="F:asparaginyl-tRNA synthase (glutamine-hydrolyzing) activity"/>
    <property type="evidence" value="ECO:0007669"/>
    <property type="project" value="RHEA"/>
</dbReference>
<dbReference type="GO" id="GO:0005524">
    <property type="term" value="F:ATP binding"/>
    <property type="evidence" value="ECO:0007669"/>
    <property type="project" value="UniProtKB-KW"/>
</dbReference>
<dbReference type="GO" id="GO:0050567">
    <property type="term" value="F:glutaminyl-tRNA synthase (glutamine-hydrolyzing) activity"/>
    <property type="evidence" value="ECO:0007669"/>
    <property type="project" value="UniProtKB-UniRule"/>
</dbReference>
<dbReference type="GO" id="GO:0070681">
    <property type="term" value="P:glutaminyl-tRNAGln biosynthesis via transamidation"/>
    <property type="evidence" value="ECO:0007669"/>
    <property type="project" value="TreeGrafter"/>
</dbReference>
<dbReference type="GO" id="GO:0006450">
    <property type="term" value="P:regulation of translational fidelity"/>
    <property type="evidence" value="ECO:0007669"/>
    <property type="project" value="InterPro"/>
</dbReference>
<dbReference type="GO" id="GO:0006412">
    <property type="term" value="P:translation"/>
    <property type="evidence" value="ECO:0007669"/>
    <property type="project" value="UniProtKB-UniRule"/>
</dbReference>
<dbReference type="Gene3D" id="1.10.20.60">
    <property type="entry name" value="Glu-tRNAGln amidotransferase C subunit, N-terminal domain"/>
    <property type="match status" value="1"/>
</dbReference>
<dbReference type="HAMAP" id="MF_00122">
    <property type="entry name" value="GatC"/>
    <property type="match status" value="1"/>
</dbReference>
<dbReference type="InterPro" id="IPR036113">
    <property type="entry name" value="Asp/Glu-ADT_sf_sub_c"/>
</dbReference>
<dbReference type="InterPro" id="IPR003837">
    <property type="entry name" value="GatC"/>
</dbReference>
<dbReference type="NCBIfam" id="TIGR00135">
    <property type="entry name" value="gatC"/>
    <property type="match status" value="1"/>
</dbReference>
<dbReference type="PANTHER" id="PTHR15004">
    <property type="entry name" value="GLUTAMYL-TRNA(GLN) AMIDOTRANSFERASE SUBUNIT C, MITOCHONDRIAL"/>
    <property type="match status" value="1"/>
</dbReference>
<dbReference type="PANTHER" id="PTHR15004:SF0">
    <property type="entry name" value="GLUTAMYL-TRNA(GLN) AMIDOTRANSFERASE SUBUNIT C, MITOCHONDRIAL"/>
    <property type="match status" value="1"/>
</dbReference>
<dbReference type="Pfam" id="PF02686">
    <property type="entry name" value="GatC"/>
    <property type="match status" value="1"/>
</dbReference>
<dbReference type="SUPFAM" id="SSF141000">
    <property type="entry name" value="Glu-tRNAGln amidotransferase C subunit"/>
    <property type="match status" value="1"/>
</dbReference>
<keyword id="KW-0067">ATP-binding</keyword>
<keyword id="KW-0436">Ligase</keyword>
<keyword id="KW-0547">Nucleotide-binding</keyword>
<keyword id="KW-0648">Protein biosynthesis</keyword>
<keyword id="KW-1185">Reference proteome</keyword>
<comment type="function">
    <text evidence="1">Allows the formation of correctly charged Asn-tRNA(Asn) or Gln-tRNA(Gln) through the transamidation of misacylated Asp-tRNA(Asn) or Glu-tRNA(Gln) in organisms which lack either or both of asparaginyl-tRNA or glutaminyl-tRNA synthetases. The reaction takes place in the presence of glutamine and ATP through an activated phospho-Asp-tRNA(Asn) or phospho-Glu-tRNA(Gln).</text>
</comment>
<comment type="catalytic activity">
    <reaction evidence="1">
        <text>L-glutamyl-tRNA(Gln) + L-glutamine + ATP + H2O = L-glutaminyl-tRNA(Gln) + L-glutamate + ADP + phosphate + H(+)</text>
        <dbReference type="Rhea" id="RHEA:17521"/>
        <dbReference type="Rhea" id="RHEA-COMP:9681"/>
        <dbReference type="Rhea" id="RHEA-COMP:9684"/>
        <dbReference type="ChEBI" id="CHEBI:15377"/>
        <dbReference type="ChEBI" id="CHEBI:15378"/>
        <dbReference type="ChEBI" id="CHEBI:29985"/>
        <dbReference type="ChEBI" id="CHEBI:30616"/>
        <dbReference type="ChEBI" id="CHEBI:43474"/>
        <dbReference type="ChEBI" id="CHEBI:58359"/>
        <dbReference type="ChEBI" id="CHEBI:78520"/>
        <dbReference type="ChEBI" id="CHEBI:78521"/>
        <dbReference type="ChEBI" id="CHEBI:456216"/>
    </reaction>
</comment>
<comment type="catalytic activity">
    <reaction evidence="1">
        <text>L-aspartyl-tRNA(Asn) + L-glutamine + ATP + H2O = L-asparaginyl-tRNA(Asn) + L-glutamate + ADP + phosphate + 2 H(+)</text>
        <dbReference type="Rhea" id="RHEA:14513"/>
        <dbReference type="Rhea" id="RHEA-COMP:9674"/>
        <dbReference type="Rhea" id="RHEA-COMP:9677"/>
        <dbReference type="ChEBI" id="CHEBI:15377"/>
        <dbReference type="ChEBI" id="CHEBI:15378"/>
        <dbReference type="ChEBI" id="CHEBI:29985"/>
        <dbReference type="ChEBI" id="CHEBI:30616"/>
        <dbReference type="ChEBI" id="CHEBI:43474"/>
        <dbReference type="ChEBI" id="CHEBI:58359"/>
        <dbReference type="ChEBI" id="CHEBI:78515"/>
        <dbReference type="ChEBI" id="CHEBI:78516"/>
        <dbReference type="ChEBI" id="CHEBI:456216"/>
    </reaction>
</comment>
<comment type="subunit">
    <text evidence="1">Heterotrimer of A, B and C subunits.</text>
</comment>
<comment type="similarity">
    <text evidence="1">Belongs to the GatC family.</text>
</comment>
<gene>
    <name evidence="1" type="primary">gatC</name>
    <name type="ordered locus">BBta_4713</name>
</gene>
<evidence type="ECO:0000255" key="1">
    <source>
        <dbReference type="HAMAP-Rule" id="MF_00122"/>
    </source>
</evidence>
<organism>
    <name type="scientific">Bradyrhizobium sp. (strain BTAi1 / ATCC BAA-1182)</name>
    <dbReference type="NCBI Taxonomy" id="288000"/>
    <lineage>
        <taxon>Bacteria</taxon>
        <taxon>Pseudomonadati</taxon>
        <taxon>Pseudomonadota</taxon>
        <taxon>Alphaproteobacteria</taxon>
        <taxon>Hyphomicrobiales</taxon>
        <taxon>Nitrobacteraceae</taxon>
        <taxon>Bradyrhizobium</taxon>
    </lineage>
</organism>
<proteinExistence type="inferred from homology"/>
<sequence length="95" mass="10401">MSVDAATVRRIAQLARIAVTDAEVPHLQGELNAMLNFVEQLSEVNVEGVEPMTSVTPMAMKKRQDVVNDGEIADDIVKNAPATENHFFLVPKVVE</sequence>
<protein>
    <recommendedName>
        <fullName evidence="1">Aspartyl/glutamyl-tRNA(Asn/Gln) amidotransferase subunit C</fullName>
        <shortName evidence="1">Asp/Glu-ADT subunit C</shortName>
        <ecNumber evidence="1">6.3.5.-</ecNumber>
    </recommendedName>
</protein>
<accession>A5EKP6</accession>
<feature type="chain" id="PRO_1000016078" description="Aspartyl/glutamyl-tRNA(Asn/Gln) amidotransferase subunit C">
    <location>
        <begin position="1"/>
        <end position="95"/>
    </location>
</feature>